<protein>
    <recommendedName>
        <fullName>Vacuolar protein sorting-associated protein ist1</fullName>
    </recommendedName>
</protein>
<keyword id="KW-0963">Cytoplasm</keyword>
<keyword id="KW-0967">Endosome</keyword>
<keyword id="KW-0333">Golgi apparatus</keyword>
<keyword id="KW-0539">Nucleus</keyword>
<keyword id="KW-1185">Reference proteome</keyword>
<accession>O74490</accession>
<feature type="chain" id="PRO_0000274480" description="Vacuolar protein sorting-associated protein ist1">
    <location>
        <begin position="1"/>
        <end position="271"/>
    </location>
</feature>
<feature type="region of interest" description="Disordered" evidence="2">
    <location>
        <begin position="189"/>
        <end position="255"/>
    </location>
</feature>
<feature type="compositionally biased region" description="Basic and acidic residues" evidence="2">
    <location>
        <begin position="192"/>
        <end position="205"/>
    </location>
</feature>
<feature type="compositionally biased region" description="Polar residues" evidence="2">
    <location>
        <begin position="226"/>
        <end position="255"/>
    </location>
</feature>
<evidence type="ECO:0000250" key="1"/>
<evidence type="ECO:0000256" key="2">
    <source>
        <dbReference type="SAM" id="MobiDB-lite"/>
    </source>
</evidence>
<evidence type="ECO:0000269" key="3">
    <source>
    </source>
</evidence>
<evidence type="ECO:0000305" key="4"/>
<gene>
    <name type="primary">ist1</name>
    <name type="ORF">SPCC1442.17c</name>
    <name type="ORF">SPCC285.02c</name>
</gene>
<organism>
    <name type="scientific">Schizosaccharomyces pombe (strain 972 / ATCC 24843)</name>
    <name type="common">Fission yeast</name>
    <dbReference type="NCBI Taxonomy" id="284812"/>
    <lineage>
        <taxon>Eukaryota</taxon>
        <taxon>Fungi</taxon>
        <taxon>Dikarya</taxon>
        <taxon>Ascomycota</taxon>
        <taxon>Taphrinomycotina</taxon>
        <taxon>Schizosaccharomycetes</taxon>
        <taxon>Schizosaccharomycetales</taxon>
        <taxon>Schizosaccharomycetaceae</taxon>
        <taxon>Schizosaccharomyces</taxon>
    </lineage>
</organism>
<dbReference type="EMBL" id="CU329672">
    <property type="protein sequence ID" value="CAA21451.1"/>
    <property type="molecule type" value="Genomic_DNA"/>
</dbReference>
<dbReference type="PIR" id="T40982">
    <property type="entry name" value="T40982"/>
</dbReference>
<dbReference type="RefSeq" id="NP_588331.1">
    <property type="nucleotide sequence ID" value="NM_001023322.2"/>
</dbReference>
<dbReference type="SMR" id="O74490"/>
<dbReference type="BioGRID" id="275577">
    <property type="interactions" value="19"/>
</dbReference>
<dbReference type="FunCoup" id="O74490">
    <property type="interactions" value="516"/>
</dbReference>
<dbReference type="STRING" id="284812.O74490"/>
<dbReference type="iPTMnet" id="O74490"/>
<dbReference type="PaxDb" id="4896-SPCC1442.17c.1"/>
<dbReference type="EnsemblFungi" id="SPCC1442.17c.1">
    <property type="protein sequence ID" value="SPCC1442.17c.1:pep"/>
    <property type="gene ID" value="SPCC1442.17c"/>
</dbReference>
<dbReference type="PomBase" id="SPCC1442.17c">
    <property type="gene designation" value="ist1"/>
</dbReference>
<dbReference type="VEuPathDB" id="FungiDB:SPCC1442.17c"/>
<dbReference type="eggNOG" id="KOG2027">
    <property type="taxonomic scope" value="Eukaryota"/>
</dbReference>
<dbReference type="HOGENOM" id="CLU_1034981_0_0_1"/>
<dbReference type="InParanoid" id="O74490"/>
<dbReference type="PhylomeDB" id="O74490"/>
<dbReference type="Reactome" id="R-SPO-6798695">
    <property type="pathway name" value="Neutrophil degranulation"/>
</dbReference>
<dbReference type="Reactome" id="R-SPO-9668328">
    <property type="pathway name" value="Sealing of the nuclear envelope (NE) by ESCRT-III"/>
</dbReference>
<dbReference type="PRO" id="PR:O74490"/>
<dbReference type="Proteomes" id="UP000002485">
    <property type="component" value="Chromosome III"/>
</dbReference>
<dbReference type="GO" id="GO:0005829">
    <property type="term" value="C:cytosol"/>
    <property type="evidence" value="ECO:0007005"/>
    <property type="project" value="PomBase"/>
</dbReference>
<dbReference type="GO" id="GO:0005768">
    <property type="term" value="C:endosome"/>
    <property type="evidence" value="ECO:0000266"/>
    <property type="project" value="PomBase"/>
</dbReference>
<dbReference type="GO" id="GO:0005794">
    <property type="term" value="C:Golgi apparatus"/>
    <property type="evidence" value="ECO:0007005"/>
    <property type="project" value="PomBase"/>
</dbReference>
<dbReference type="GO" id="GO:0180028">
    <property type="term" value="C:mitotic spindle pole body attachment site"/>
    <property type="evidence" value="ECO:0000269"/>
    <property type="project" value="PomBase"/>
</dbReference>
<dbReference type="GO" id="GO:0005634">
    <property type="term" value="C:nucleus"/>
    <property type="evidence" value="ECO:0007005"/>
    <property type="project" value="PomBase"/>
</dbReference>
<dbReference type="GO" id="GO:0008104">
    <property type="term" value="P:protein localization"/>
    <property type="evidence" value="ECO:0000318"/>
    <property type="project" value="GO_Central"/>
</dbReference>
<dbReference type="GO" id="GO:0043328">
    <property type="term" value="P:protein transport to vacuole involved in ubiquitin-dependent protein catabolic process via the multivesicular body sorting pathway"/>
    <property type="evidence" value="ECO:0000266"/>
    <property type="project" value="PomBase"/>
</dbReference>
<dbReference type="Gene3D" id="1.20.1260.60">
    <property type="entry name" value="Vacuolar protein sorting-associated protein Ist1"/>
    <property type="match status" value="1"/>
</dbReference>
<dbReference type="InterPro" id="IPR005061">
    <property type="entry name" value="Ist1"/>
</dbReference>
<dbReference type="InterPro" id="IPR042277">
    <property type="entry name" value="IST1-like"/>
</dbReference>
<dbReference type="PANTHER" id="PTHR12161">
    <property type="entry name" value="IST1 FAMILY MEMBER"/>
    <property type="match status" value="1"/>
</dbReference>
<dbReference type="PANTHER" id="PTHR12161:SF5">
    <property type="entry name" value="IST1 HOMOLOG"/>
    <property type="match status" value="1"/>
</dbReference>
<dbReference type="Pfam" id="PF03398">
    <property type="entry name" value="Ist1"/>
    <property type="match status" value="1"/>
</dbReference>
<sequence>MSRLQIQLKLAASRIEILRQKEEALAKQARRNVALGLKSYSPALAKARIEPLIMQDIYIELLELLQVDVEILANRCVVLEKRAFNDSMSFKSSLYHVMAAAPQLQIKELRFVHDFLVKLYGKEFARLSDPDLATNDTAFYQLLYPPIPKDELVEAYRKELIRTYFPNDYPKEANKDIPSSAEADTMLNLESSENREQPTSLKEENTQEDDEKVNGNLANISKRAEPQNNGSTNASSLQSSNYLPTNPTLTHSNKAPSFEELAARLDRLKHL</sequence>
<comment type="function">
    <text evidence="1">Involved in a late step in sorting of cargo proteins of the multivesicular body (MVB) for incorporation into intralumenal vesicles. The lumenal sequestrated membrane proteins are targeted into the vacuole after fusion of the endosome with the vacuole (By similarity).</text>
</comment>
<comment type="subcellular location">
    <subcellularLocation>
        <location evidence="3">Cytoplasm</location>
    </subcellularLocation>
    <subcellularLocation>
        <location evidence="3">Nucleus</location>
    </subcellularLocation>
    <subcellularLocation>
        <location evidence="3">Golgi apparatus</location>
    </subcellularLocation>
    <subcellularLocation>
        <location evidence="1">Endosome</location>
    </subcellularLocation>
</comment>
<comment type="similarity">
    <text evidence="4">Belongs to the IST1 family.</text>
</comment>
<name>IST1_SCHPO</name>
<proteinExistence type="inferred from homology"/>
<reference key="1">
    <citation type="journal article" date="2002" name="Nature">
        <title>The genome sequence of Schizosaccharomyces pombe.</title>
        <authorList>
            <person name="Wood V."/>
            <person name="Gwilliam R."/>
            <person name="Rajandream M.A."/>
            <person name="Lyne M.H."/>
            <person name="Lyne R."/>
            <person name="Stewart A."/>
            <person name="Sgouros J.G."/>
            <person name="Peat N."/>
            <person name="Hayles J."/>
            <person name="Baker S.G."/>
            <person name="Basham D."/>
            <person name="Bowman S."/>
            <person name="Brooks K."/>
            <person name="Brown D."/>
            <person name="Brown S."/>
            <person name="Chillingworth T."/>
            <person name="Churcher C.M."/>
            <person name="Collins M."/>
            <person name="Connor R."/>
            <person name="Cronin A."/>
            <person name="Davis P."/>
            <person name="Feltwell T."/>
            <person name="Fraser A."/>
            <person name="Gentles S."/>
            <person name="Goble A."/>
            <person name="Hamlin N."/>
            <person name="Harris D.E."/>
            <person name="Hidalgo J."/>
            <person name="Hodgson G."/>
            <person name="Holroyd S."/>
            <person name="Hornsby T."/>
            <person name="Howarth S."/>
            <person name="Huckle E.J."/>
            <person name="Hunt S."/>
            <person name="Jagels K."/>
            <person name="James K.D."/>
            <person name="Jones L."/>
            <person name="Jones M."/>
            <person name="Leather S."/>
            <person name="McDonald S."/>
            <person name="McLean J."/>
            <person name="Mooney P."/>
            <person name="Moule S."/>
            <person name="Mungall K.L."/>
            <person name="Murphy L.D."/>
            <person name="Niblett D."/>
            <person name="Odell C."/>
            <person name="Oliver K."/>
            <person name="O'Neil S."/>
            <person name="Pearson D."/>
            <person name="Quail M.A."/>
            <person name="Rabbinowitsch E."/>
            <person name="Rutherford K.M."/>
            <person name="Rutter S."/>
            <person name="Saunders D."/>
            <person name="Seeger K."/>
            <person name="Sharp S."/>
            <person name="Skelton J."/>
            <person name="Simmonds M.N."/>
            <person name="Squares R."/>
            <person name="Squares S."/>
            <person name="Stevens K."/>
            <person name="Taylor K."/>
            <person name="Taylor R.G."/>
            <person name="Tivey A."/>
            <person name="Walsh S.V."/>
            <person name="Warren T."/>
            <person name="Whitehead S."/>
            <person name="Woodward J.R."/>
            <person name="Volckaert G."/>
            <person name="Aert R."/>
            <person name="Robben J."/>
            <person name="Grymonprez B."/>
            <person name="Weltjens I."/>
            <person name="Vanstreels E."/>
            <person name="Rieger M."/>
            <person name="Schaefer M."/>
            <person name="Mueller-Auer S."/>
            <person name="Gabel C."/>
            <person name="Fuchs M."/>
            <person name="Duesterhoeft A."/>
            <person name="Fritzc C."/>
            <person name="Holzer E."/>
            <person name="Moestl D."/>
            <person name="Hilbert H."/>
            <person name="Borzym K."/>
            <person name="Langer I."/>
            <person name="Beck A."/>
            <person name="Lehrach H."/>
            <person name="Reinhardt R."/>
            <person name="Pohl T.M."/>
            <person name="Eger P."/>
            <person name="Zimmermann W."/>
            <person name="Wedler H."/>
            <person name="Wambutt R."/>
            <person name="Purnelle B."/>
            <person name="Goffeau A."/>
            <person name="Cadieu E."/>
            <person name="Dreano S."/>
            <person name="Gloux S."/>
            <person name="Lelaure V."/>
            <person name="Mottier S."/>
            <person name="Galibert F."/>
            <person name="Aves S.J."/>
            <person name="Xiang Z."/>
            <person name="Hunt C."/>
            <person name="Moore K."/>
            <person name="Hurst S.M."/>
            <person name="Lucas M."/>
            <person name="Rochet M."/>
            <person name="Gaillardin C."/>
            <person name="Tallada V.A."/>
            <person name="Garzon A."/>
            <person name="Thode G."/>
            <person name="Daga R.R."/>
            <person name="Cruzado L."/>
            <person name="Jimenez J."/>
            <person name="Sanchez M."/>
            <person name="del Rey F."/>
            <person name="Benito J."/>
            <person name="Dominguez A."/>
            <person name="Revuelta J.L."/>
            <person name="Moreno S."/>
            <person name="Armstrong J."/>
            <person name="Forsburg S.L."/>
            <person name="Cerutti L."/>
            <person name="Lowe T."/>
            <person name="McCombie W.R."/>
            <person name="Paulsen I."/>
            <person name="Potashkin J."/>
            <person name="Shpakovski G.V."/>
            <person name="Ussery D."/>
            <person name="Barrell B.G."/>
            <person name="Nurse P."/>
        </authorList>
    </citation>
    <scope>NUCLEOTIDE SEQUENCE [LARGE SCALE GENOMIC DNA]</scope>
    <source>
        <strain>972 / ATCC 24843</strain>
    </source>
</reference>
<reference key="2">
    <citation type="journal article" date="2006" name="Nat. Biotechnol.">
        <title>ORFeome cloning and global analysis of protein localization in the fission yeast Schizosaccharomyces pombe.</title>
        <authorList>
            <person name="Matsuyama A."/>
            <person name="Arai R."/>
            <person name="Yashiroda Y."/>
            <person name="Shirai A."/>
            <person name="Kamata A."/>
            <person name="Sekido S."/>
            <person name="Kobayashi Y."/>
            <person name="Hashimoto A."/>
            <person name="Hamamoto M."/>
            <person name="Hiraoka Y."/>
            <person name="Horinouchi S."/>
            <person name="Yoshida M."/>
        </authorList>
    </citation>
    <scope>SUBCELLULAR LOCATION [LARGE SCALE ANALYSIS]</scope>
</reference>